<keyword id="KW-0436">Ligase</keyword>
<keyword id="KW-0489">Methyltransferase</keyword>
<keyword id="KW-0511">Multifunctional enzyme</keyword>
<keyword id="KW-0560">Oxidoreductase</keyword>
<keyword id="KW-0596">Phosphopantetheine</keyword>
<keyword id="KW-0597">Phosphoprotein</keyword>
<keyword id="KW-0677">Repeat</keyword>
<keyword id="KW-0808">Transferase</keyword>
<sequence length="4061" mass="443958">MTKIQEQEPIAVIGMACRFPGGSDTPSKLWELLQKPRDLSKRVPEDRFDSTGFFHENGTHHGATDCRDAYFLEEDVTRFDNAFFNIQPGEAEALDPQQRLLMETVYESLCTAGQTVEGLRGSRTAMYVGLMCDDWSQMTSRDWDLVPTYTATGTSRAVMSNRISYFFDWHGPSMTVDTACSSSLVAVHQGVTSLRNGEAPIAVAAGANLILAPGMWIAESNLHMLSPTGTSKMWDAAADGYARGEGIAAVVLKPLSAALRDGDNIDCIIRETGVNQDGRTAGLTMPSNTAQSQLIRDTYRRAGLDINDPKDRPQFFHAHGTGTPAGDPQEAEAISRAFFDKSDVKDPLYVGSIKTVIGQADIVGWWDSPPPPNRHTEGTAGLASLIGTTLAMKHGTIPQNLHFNTLSDRVAPFCAHLRVPAKSLPWPSPVTGQPRRASINSFDQWKKERTADSDFLPQIGFGGTNAHAIIEGYEPEQPPHLVTGPTTTKTSLFTPLTISATSSSSLRSMLSDLQKYLVNHPDTNLRDVAYTLQSRRSTFSYRRSVVCRSADDAVNRIEGLLVDTSAENGLNSRYADVSNPSSILGVFTGQGAQWPRMGAWLIEESPFVAQRLDELDEALATLPEGDRPDWKLSEQLLADASASRLSEAAIAQPLCTAVQVVLVDLTRAAGIHLRAVVGHSSGEIGAAYAAGFLSATDAIRVAYYRGVYAKLSRSPKDESIKGAMMAAGTSYEDALELCALEEFEGRLQVAARNSSSSVTLSGDEDAIDEVVEILKDEGRFARKLKVDTAYHSHHMQACAAPYLAALERANITAKDGNGTTWYSSVVDGQVMTKNIIQQSQYWVDNMTNAVLFAPAVTAAVAQAGPFDIAIEFGPHPALKGPCLDTVEEAAGSKIPYTGLLARQKNDVEELLAALGFLWTHLGAGSVNFDGFENAISGASSPRRLVSTLPAYPFDHSRSFYTLTRFSGGHQNMHSPLHPLLGRRCVETEADDEVSWRNILRSSENIWLQGHALQGQAVFPAMGYIAMAVEAAASLAGPDRRLGLISLEDVVIGRAMAFGDESVGMEAKVALKVSHFADDELRGKITCHSGLPHDSATPLALNFSATVNVTFHEPEAESLPAVRTDEINLANAEPQRLYSQFNKLGYNYSPPFTGVTSVHRKKGFATGTIEDISGDNWEDQLIVHPGLLDSALQTAFAAYCHPHDNRFWTLHVPTAIRSIVINPYFTDRGAGRHRQFEYQSSCRDGLESPVEADINVFAGQGQPHAFVQFESVRVQPFSVAGPQDDALIFSRFDYKLAEPDATVVVEGEGLPPPDADVIFQTIERVGFFYLRRIHETITPAEAAATLPHYKLLIEFTGRVVPRVAAGEHPTVPKEAMGDTTAYINSLLAKYRHRSDMQLIGIVGENIIPEIRRSGSMIEHMLQDGVLDRFYEEGFEYANIWIARVIAQIAHRHPRMDIFEVGAGTGGSTRAILPKLGDAFASYTFTDLSAGFFERANDRFINYADRMIYSTYNMENSPAEQGFEEGSYDVVLASNALHATGKLDETISNARRLLRPGGYLVLVEIMGNDFLGIGCSMGGLPGWWAGAAVDPTRSDGPCLNVNQWDALVRRHGFNGVETHTPLDRKLQWYAVLVCRAVDDRVVSLREPLSTTSPVPVSAADELVVVGGRTPAVASLVKESTELLKTRYTTITHIETLEEFNTTPLSQGSSVLSLTELDEQFLEVRTEAKLEALKTLWRNGRTISWVTRGARKENPHTSSMVGLARVMRYEYPHLNLQIVDYDRLPESKAIAESLLRLELGKTWESENLLWTVEPELHYVDGQLFIPRLYPYDEANKRWNTSRRTVTTEVDPHETTVVLEPSTDGNTVKPCAISPLRVRSDPPRRSSGKQITIRLQQSLLQSIKVGEAGFFTLCAGTDEESGESLVAFVDTPAESSVQVPVEWTVKTTEAADGSTALGYAATHLLAQSIIAAAVPRFGTLVVHEASSLLKDALDKEAAAEGIQVVFTTAEKTGKVDDGTVHIHQRLPARLVRKLLPRDVSVFVNLSPAPGASELLRSCLARHTATATVEDFVRIQPHISPNADIWEAGQALKTTWNAVTRHRRRTSNLEISKVISLNEANSVNPVEGPLTVVDWNTKSVEVALRPIDHGTIFRADGTYFLLGLSGELGQSLCSWMVSHGARNVVLSSRSPKVDPRYIEELAAQGANVRALACDITRRESLRACYDTIRAEMPPIIGVANGAMILEDVMFDDLEFESQERAMPPKVEGSLYLDELFYDTPLDFFVLLTSLAHIGGNTGQSTYVMANLFMVALAAQRRDIRGVVGSDMAIGSVTGMGFFERSALDKDHFSRMGYRNMSEQDLHTQFAEAILAGKPGAKGIPEVAIGLQPYRDTPNIQAQLRMDPRFKHYLLQDRGANTQGQAGGSQGNAKPRVRLASVTTRAEAIKVVFDTFVDRLKRILLMSATEVIDPMVSLVELGADSIMAVDVRGWFLKELDVDVPVLKILGPGETIALLVEEAVDKLPVDIVDISKLEHGGEPDLTQTAPAPKPEPVRQPELPPQPTSAASSSDTGSDSSPTSNSVSETQTGTPLETPMSTTEAGYFKQESQQLQQKLQKHQEQTSQSWRQKVVESSTEHTEQMTFGQNRFWFLTHYVDDPTTFNIAYVGKLTGRIRVDDLSKAVQAAAQRHESLRTRFFWSDDDTKTPMQGILSNTLVRLETATIKSAAEAAQELDEMRAYVWDLGDWVPLRMRLLSLSDTEHFLLIGTHHISMDGHSFSVLMLDIQQAYNSPGQRLAPLPVASQARAFGAHQRLSYETGKFKTAIEHHRSQLPAADLVRPIELFSFARTQVRPALDHYGTHVAKTHLPLATAAKLKQLARGHRATAFHAYLAGLQALLFRLLPAATTDKVFVGLADANRLDSKFMGSIGNFLNVLPVRFDRADRQTFGQAMEVARDRAYGGLKHSALPFDLLLDELEVPRSNAWAPVFQIFMDYRLVVKEHANKDWIGCKISEENWHTSRSGYDVALEIMEGHDGAMVAMHVQKALYDASAADLLLKTYVNVLNQVAAKGDKFVVKELATWDTESEQKGLATGHGPNLTLEWPATVAHRIDQVIADHPDAVALKDGHGRSLTYKEMDERVESIAHTLREHVPRTDKQPIVGVLQTPSADWMCSLLAILRFGGIYLPLDLRNGAPRLKSNVDAARPVAVLTDASSAGQVTDVCHHSDVVVINVSHLPASTGLPRMETTAATADGSAYIIFTSGSTGEPKGIVVKHSGLRANLEGYHREWAIDTMSDVVLQQTALSFDASLVQIFAALTTGGSLFVVPADARGDPSEVTKLMVENGVTMTQATPSEYDMWFRFAPETLHRCSTWKAAWFGGERAGPSVLDGFRKACRAIPSLRVFTSYGPTESTISAMKGEADVRNPDLRVPVPGRLLPNYAAYIVDDTLQPVPTGVPGEIVLGGAGVGANEYLNQKDMTDKQFPRDKFTSRGDSGWGRMYRTGDYGRLDARGYLTVEGRIAGDTQVKLRGFRIELAEIERVMVKEADGTISDAVVTLRGEGEQEGFLAAHVVFNGKIQGDKETGEAVDKLRARLPLCLPQYMCPAVIVPLDSLPLTSHHKVDRKALQTLELPKVEASVAEQLQNLTATERTLADLWDSLLPPRAAADALGPRSHFFSSGGNSLLLVKLQAAIKRDFGDAPRLSKLMSAPELGSMAALLDDGVGRVNWDKEIALDDELHGASWRARVTPAGADGISVLITGATGSLGRRITQRLANDNRVSRVVCLVRPVDGRDMANVFPGIGDKVQIMPADLPTLPADSDIPDIDVVLHCAADRNFWDGYHAVKPVNVDTAKALARLCLRRGATLHVLSSGAMAAYEGDDKTPGGSLPRPTPDDGYLSSKWVAERYLAGVARETGLPLTAHRPTRVSDAEALRVEQMGKTEMGMAKIMLSLSEKLNVRPDFTNLGGIIDLSPLEDAVEAVTQAVTTNIREEASGIRIINHAGTARMRTNALAAHAEELFGRAENSAVMGLPSVSALHWVGLAKRAGLFEWFFTAQDLVVEDGEGNTIASRR</sequence>
<organism>
    <name type="scientific">Hapsidospora irregularis</name>
    <dbReference type="NCBI Taxonomy" id="95324"/>
    <lineage>
        <taxon>Eukaryota</taxon>
        <taxon>Fungi</taxon>
        <taxon>Dikarya</taxon>
        <taxon>Ascomycota</taxon>
        <taxon>Pezizomycotina</taxon>
        <taxon>Sordariomycetes</taxon>
        <taxon>Hypocreomycetidae</taxon>
        <taxon>Hypocreales</taxon>
        <taxon>Bionectriaceae</taxon>
        <taxon>Hapsidospora</taxon>
    </lineage>
</organism>
<comment type="function">
    <text evidence="7">Hybrid PKS-NRPS synthetase; part of the gene cluster that mediates the biosynthesis of the tetramic acids Sch210971 and Sch210972, potential anti-HIV fungal natural product that contain a decalin core (PubMed:25885659). The PKS module of tasS together with the enoylreductase tasC catalyze the formation of the polyketide unit which is then conjugated to 4-hydroxyl-4-methyl glutamate (HMG) by the condensation domain of the tasS NRPS module (PubMed:25885659). One unique structural feature of Sch210971 and Sch210972 is the tetramic acid motif proposed to be derived from the non-proteinogenic amino acid HMG, by a Dieckmann-type condensation catalyzed by the reductase domain of tasS (PubMed:25885659). The aldolase tasA catalyzes the aldol condensation of 2 molecules of pyruvic acid to yield the intermediate 4-hydroxyl-4-methyl-2-oxoglutarate (HMOG), which can then be stereoselectively transaminated, may be by tasG, to form HMG (PubMed:25885659). The Diels-Alderase tas3 then uses the Dieckmann product of tasS as substrate and catalyzes the Diels-Alder cycloaddition to form the decalin ring of Sch210971 and Sch210972 (PubMed:25885659).</text>
</comment>
<comment type="catalytic activity">
    <reaction evidence="7">
        <text>(2S,4S)-4-hydroxy-4-methylglutamate + 8 malonyl-CoA + 3 S-adenosyl-L-methionine + ATP + 8 NADPH + 11 H(+) = (2S)-3-[(2S)-3,5-dioxo-4-[(2E,4R,6R,8E,10E,12E)-4,6,12-trimethyltetradeca-2,8,10,12-tetraenoyl]pyrrolidin-2-yl]-2-hydroxy-2-methylpropanoate + AMP + 3 S-adenosyl-L-homocysteine + 8 CO2 + diphosphate + 8 NADP(+) + 8 CoA + 6 H2O</text>
        <dbReference type="Rhea" id="RHEA:67264"/>
        <dbReference type="ChEBI" id="CHEBI:15377"/>
        <dbReference type="ChEBI" id="CHEBI:15378"/>
        <dbReference type="ChEBI" id="CHEBI:16526"/>
        <dbReference type="ChEBI" id="CHEBI:30616"/>
        <dbReference type="ChEBI" id="CHEBI:33019"/>
        <dbReference type="ChEBI" id="CHEBI:57287"/>
        <dbReference type="ChEBI" id="CHEBI:57384"/>
        <dbReference type="ChEBI" id="CHEBI:57783"/>
        <dbReference type="ChEBI" id="CHEBI:57856"/>
        <dbReference type="ChEBI" id="CHEBI:58349"/>
        <dbReference type="ChEBI" id="CHEBI:59789"/>
        <dbReference type="ChEBI" id="CHEBI:167901"/>
        <dbReference type="ChEBI" id="CHEBI:167907"/>
        <dbReference type="ChEBI" id="CHEBI:456215"/>
    </reaction>
    <physiologicalReaction direction="left-to-right" evidence="7">
        <dbReference type="Rhea" id="RHEA:67265"/>
    </physiologicalReaction>
</comment>
<comment type="pathway">
    <text evidence="7">Secondary metabolite biosynthesis.</text>
</comment>
<comment type="domain">
    <text evidence="10">NRP synthetases are composed of discrete domains (adenylation (A), thiolation (T) or peptidyl carrier protein (PCP) and condensation (C) domains) which when grouped together are referred to as a single module. Each module is responsible for the recognition (via the A domain) and incorporation of a single amino acid into the growing peptide product. Thus, an NRP synthetase is generally composed of one or more modules and can terminate in a thioesterase domain (TE) that releases the newly synthesized peptide from the enzyme. Occasionally, epimerase (E) domains (responsible for L- to D- amino acid conversion) are present within the NRP synthetase. CcsA also contains a polyketide synthase module (PKS) consisting of several catalytic domains including a ketoacyl synthase domain (KS), an acyl transferase domain (AT), a dehydratase domain (DH), a methyltransferase domain (MT), and a ketoreductase domain (KR). Instead of a thioesterase domain (TE), tasS finishes with a reductase-like domain (R) for peptide release. TasS has the following architecture: KS-MAT-DH-MT-KR-PCP-C-A-T-R.</text>
</comment>
<comment type="similarity">
    <text evidence="9">In the C-terminal section; belongs to the NRP synthetase family.</text>
</comment>
<gene>
    <name evidence="8" type="primary">tasS</name>
</gene>
<evidence type="ECO:0000255" key="1"/>
<evidence type="ECO:0000255" key="2">
    <source>
        <dbReference type="PROSITE-ProRule" id="PRU00258"/>
    </source>
</evidence>
<evidence type="ECO:0000255" key="3">
    <source>
        <dbReference type="PROSITE-ProRule" id="PRU01348"/>
    </source>
</evidence>
<evidence type="ECO:0000255" key="4">
    <source>
        <dbReference type="PROSITE-ProRule" id="PRU01363"/>
    </source>
</evidence>
<evidence type="ECO:0000255" key="5">
    <source>
        <dbReference type="PROSITE-ProRule" id="PRU10022"/>
    </source>
</evidence>
<evidence type="ECO:0000256" key="6">
    <source>
        <dbReference type="SAM" id="MobiDB-lite"/>
    </source>
</evidence>
<evidence type="ECO:0000269" key="7">
    <source>
    </source>
</evidence>
<evidence type="ECO:0000303" key="8">
    <source>
    </source>
</evidence>
<evidence type="ECO:0000305" key="9"/>
<evidence type="ECO:0000305" key="10">
    <source>
    </source>
</evidence>
<protein>
    <recommendedName>
        <fullName evidence="8">Hybrid PKS-NRPS synthetase tasS</fullName>
        <shortName evidence="8">PKS-NRPS tasS</shortName>
        <ecNumber evidence="7">2.3.1.-</ecNumber>
        <ecNumber evidence="7">6.3.2.-</ecNumber>
    </recommendedName>
    <alternativeName>
        <fullName evidence="8">Tetramic acid Sch210971/2 biosynthesis cluster protein S</fullName>
    </alternativeName>
</protein>
<dbReference type="EC" id="2.3.1.-" evidence="7"/>
<dbReference type="EC" id="6.3.2.-" evidence="7"/>
<dbReference type="EMBL" id="KP835202">
    <property type="protein sequence ID" value="AKG54858.1"/>
    <property type="molecule type" value="Genomic_DNA"/>
</dbReference>
<dbReference type="SMR" id="A0A0F7GFS4"/>
<dbReference type="GO" id="GO:0004315">
    <property type="term" value="F:3-oxoacyl-[acyl-carrier-protein] synthase activity"/>
    <property type="evidence" value="ECO:0007669"/>
    <property type="project" value="InterPro"/>
</dbReference>
<dbReference type="GO" id="GO:0004312">
    <property type="term" value="F:fatty acid synthase activity"/>
    <property type="evidence" value="ECO:0007669"/>
    <property type="project" value="TreeGrafter"/>
</dbReference>
<dbReference type="GO" id="GO:0016874">
    <property type="term" value="F:ligase activity"/>
    <property type="evidence" value="ECO:0007669"/>
    <property type="project" value="UniProtKB-KW"/>
</dbReference>
<dbReference type="GO" id="GO:0008168">
    <property type="term" value="F:methyltransferase activity"/>
    <property type="evidence" value="ECO:0007669"/>
    <property type="project" value="UniProtKB-KW"/>
</dbReference>
<dbReference type="GO" id="GO:0016491">
    <property type="term" value="F:oxidoreductase activity"/>
    <property type="evidence" value="ECO:0007669"/>
    <property type="project" value="UniProtKB-KW"/>
</dbReference>
<dbReference type="GO" id="GO:0031177">
    <property type="term" value="F:phosphopantetheine binding"/>
    <property type="evidence" value="ECO:0007669"/>
    <property type="project" value="InterPro"/>
</dbReference>
<dbReference type="GO" id="GO:0006633">
    <property type="term" value="P:fatty acid biosynthetic process"/>
    <property type="evidence" value="ECO:0007669"/>
    <property type="project" value="InterPro"/>
</dbReference>
<dbReference type="GO" id="GO:0032259">
    <property type="term" value="P:methylation"/>
    <property type="evidence" value="ECO:0007669"/>
    <property type="project" value="UniProtKB-KW"/>
</dbReference>
<dbReference type="GO" id="GO:0009403">
    <property type="term" value="P:toxin biosynthetic process"/>
    <property type="evidence" value="ECO:0007669"/>
    <property type="project" value="UniProtKB-ARBA"/>
</dbReference>
<dbReference type="CDD" id="cd05930">
    <property type="entry name" value="A_NRPS"/>
    <property type="match status" value="1"/>
</dbReference>
<dbReference type="CDD" id="cd02440">
    <property type="entry name" value="AdoMet_MTases"/>
    <property type="match status" value="1"/>
</dbReference>
<dbReference type="CDD" id="cd19532">
    <property type="entry name" value="C_PKS-NRPS"/>
    <property type="match status" value="1"/>
</dbReference>
<dbReference type="CDD" id="cd00833">
    <property type="entry name" value="PKS"/>
    <property type="match status" value="1"/>
</dbReference>
<dbReference type="Gene3D" id="3.30.300.30">
    <property type="match status" value="1"/>
</dbReference>
<dbReference type="Gene3D" id="3.30.70.3290">
    <property type="match status" value="1"/>
</dbReference>
<dbReference type="Gene3D" id="3.40.47.10">
    <property type="match status" value="1"/>
</dbReference>
<dbReference type="Gene3D" id="1.10.1200.10">
    <property type="entry name" value="ACP-like"/>
    <property type="match status" value="2"/>
</dbReference>
<dbReference type="Gene3D" id="3.30.559.10">
    <property type="entry name" value="Chloramphenicol acetyltransferase-like domain"/>
    <property type="match status" value="1"/>
</dbReference>
<dbReference type="Gene3D" id="3.40.366.10">
    <property type="entry name" value="Malonyl-Coenzyme A Acyl Carrier Protein, domain 2"/>
    <property type="match status" value="1"/>
</dbReference>
<dbReference type="Gene3D" id="3.40.50.12780">
    <property type="entry name" value="N-terminal domain of ligase-like"/>
    <property type="match status" value="1"/>
</dbReference>
<dbReference type="Gene3D" id="3.40.50.720">
    <property type="entry name" value="NAD(P)-binding Rossmann-like Domain"/>
    <property type="match status" value="3"/>
</dbReference>
<dbReference type="Gene3D" id="3.30.559.30">
    <property type="entry name" value="Nonribosomal peptide synthetase, condensation domain"/>
    <property type="match status" value="1"/>
</dbReference>
<dbReference type="Gene3D" id="3.10.129.110">
    <property type="entry name" value="Polyketide synthase dehydratase"/>
    <property type="match status" value="1"/>
</dbReference>
<dbReference type="Gene3D" id="3.40.50.150">
    <property type="entry name" value="Vaccinia Virus protein VP39"/>
    <property type="match status" value="1"/>
</dbReference>
<dbReference type="InterPro" id="IPR001227">
    <property type="entry name" value="Ac_transferase_dom_sf"/>
</dbReference>
<dbReference type="InterPro" id="IPR036736">
    <property type="entry name" value="ACP-like_sf"/>
</dbReference>
<dbReference type="InterPro" id="IPR014043">
    <property type="entry name" value="Acyl_transferase_dom"/>
</dbReference>
<dbReference type="InterPro" id="IPR016035">
    <property type="entry name" value="Acyl_Trfase/lysoPLipase"/>
</dbReference>
<dbReference type="InterPro" id="IPR045851">
    <property type="entry name" value="AMP-bd_C_sf"/>
</dbReference>
<dbReference type="InterPro" id="IPR020845">
    <property type="entry name" value="AMP-binding_CS"/>
</dbReference>
<dbReference type="InterPro" id="IPR000873">
    <property type="entry name" value="AMP-dep_synth/lig_dom"/>
</dbReference>
<dbReference type="InterPro" id="IPR042099">
    <property type="entry name" value="ANL_N_sf"/>
</dbReference>
<dbReference type="InterPro" id="IPR023213">
    <property type="entry name" value="CAT-like_dom_sf"/>
</dbReference>
<dbReference type="InterPro" id="IPR001242">
    <property type="entry name" value="Condensatn"/>
</dbReference>
<dbReference type="InterPro" id="IPR013120">
    <property type="entry name" value="Far_NAD-bd"/>
</dbReference>
<dbReference type="InterPro" id="IPR018201">
    <property type="entry name" value="Ketoacyl_synth_AS"/>
</dbReference>
<dbReference type="InterPro" id="IPR014031">
    <property type="entry name" value="Ketoacyl_synth_C"/>
</dbReference>
<dbReference type="InterPro" id="IPR014030">
    <property type="entry name" value="Ketoacyl_synth_N"/>
</dbReference>
<dbReference type="InterPro" id="IPR016036">
    <property type="entry name" value="Malonyl_transacylase_ACP-bd"/>
</dbReference>
<dbReference type="InterPro" id="IPR013217">
    <property type="entry name" value="Methyltransf_12"/>
</dbReference>
<dbReference type="InterPro" id="IPR036291">
    <property type="entry name" value="NAD(P)-bd_dom_sf"/>
</dbReference>
<dbReference type="InterPro" id="IPR020841">
    <property type="entry name" value="PKS_Beta-ketoAc_synthase_dom"/>
</dbReference>
<dbReference type="InterPro" id="IPR042104">
    <property type="entry name" value="PKS_dehydratase_sf"/>
</dbReference>
<dbReference type="InterPro" id="IPR020807">
    <property type="entry name" value="PKS_DH"/>
</dbReference>
<dbReference type="InterPro" id="IPR049551">
    <property type="entry name" value="PKS_DH_C"/>
</dbReference>
<dbReference type="InterPro" id="IPR049552">
    <property type="entry name" value="PKS_DH_N"/>
</dbReference>
<dbReference type="InterPro" id="IPR013968">
    <property type="entry name" value="PKS_KR"/>
</dbReference>
<dbReference type="InterPro" id="IPR049900">
    <property type="entry name" value="PKS_mFAS_DH"/>
</dbReference>
<dbReference type="InterPro" id="IPR050091">
    <property type="entry name" value="PKS_NRPS_Biosynth_Enz"/>
</dbReference>
<dbReference type="InterPro" id="IPR020806">
    <property type="entry name" value="PKS_PP-bd"/>
</dbReference>
<dbReference type="InterPro" id="IPR009081">
    <property type="entry name" value="PP-bd_ACP"/>
</dbReference>
<dbReference type="InterPro" id="IPR006162">
    <property type="entry name" value="Ppantetheine_attach_site"/>
</dbReference>
<dbReference type="InterPro" id="IPR029063">
    <property type="entry name" value="SAM-dependent_MTases_sf"/>
</dbReference>
<dbReference type="InterPro" id="IPR016039">
    <property type="entry name" value="Thiolase-like"/>
</dbReference>
<dbReference type="PANTHER" id="PTHR43775">
    <property type="entry name" value="FATTY ACID SYNTHASE"/>
    <property type="match status" value="1"/>
</dbReference>
<dbReference type="PANTHER" id="PTHR43775:SF20">
    <property type="entry name" value="HYBRID PKS-NRPS SYNTHETASE APDA"/>
    <property type="match status" value="1"/>
</dbReference>
<dbReference type="Pfam" id="PF00698">
    <property type="entry name" value="Acyl_transf_1"/>
    <property type="match status" value="1"/>
</dbReference>
<dbReference type="Pfam" id="PF00501">
    <property type="entry name" value="AMP-binding"/>
    <property type="match status" value="1"/>
</dbReference>
<dbReference type="Pfam" id="PF00668">
    <property type="entry name" value="Condensation"/>
    <property type="match status" value="1"/>
</dbReference>
<dbReference type="Pfam" id="PF22621">
    <property type="entry name" value="CurL-like_PKS_C"/>
    <property type="match status" value="1"/>
</dbReference>
<dbReference type="Pfam" id="PF00109">
    <property type="entry name" value="ketoacyl-synt"/>
    <property type="match status" value="1"/>
</dbReference>
<dbReference type="Pfam" id="PF02801">
    <property type="entry name" value="Ketoacyl-synt_C"/>
    <property type="match status" value="1"/>
</dbReference>
<dbReference type="Pfam" id="PF08659">
    <property type="entry name" value="KR"/>
    <property type="match status" value="1"/>
</dbReference>
<dbReference type="Pfam" id="PF08242">
    <property type="entry name" value="Methyltransf_12"/>
    <property type="match status" value="1"/>
</dbReference>
<dbReference type="Pfam" id="PF07993">
    <property type="entry name" value="NAD_binding_4"/>
    <property type="match status" value="1"/>
</dbReference>
<dbReference type="Pfam" id="PF21089">
    <property type="entry name" value="PKS_DH_N"/>
    <property type="match status" value="1"/>
</dbReference>
<dbReference type="Pfam" id="PF00550">
    <property type="entry name" value="PP-binding"/>
    <property type="match status" value="2"/>
</dbReference>
<dbReference type="Pfam" id="PF14765">
    <property type="entry name" value="PS-DH"/>
    <property type="match status" value="1"/>
</dbReference>
<dbReference type="SMART" id="SM00827">
    <property type="entry name" value="PKS_AT"/>
    <property type="match status" value="1"/>
</dbReference>
<dbReference type="SMART" id="SM00826">
    <property type="entry name" value="PKS_DH"/>
    <property type="match status" value="1"/>
</dbReference>
<dbReference type="SMART" id="SM00822">
    <property type="entry name" value="PKS_KR"/>
    <property type="match status" value="1"/>
</dbReference>
<dbReference type="SMART" id="SM00825">
    <property type="entry name" value="PKS_KS"/>
    <property type="match status" value="1"/>
</dbReference>
<dbReference type="SMART" id="SM00823">
    <property type="entry name" value="PKS_PP"/>
    <property type="match status" value="2"/>
</dbReference>
<dbReference type="SUPFAM" id="SSF56801">
    <property type="entry name" value="Acetyl-CoA synthetase-like"/>
    <property type="match status" value="1"/>
</dbReference>
<dbReference type="SUPFAM" id="SSF47336">
    <property type="entry name" value="ACP-like"/>
    <property type="match status" value="2"/>
</dbReference>
<dbReference type="SUPFAM" id="SSF52777">
    <property type="entry name" value="CoA-dependent acyltransferases"/>
    <property type="match status" value="2"/>
</dbReference>
<dbReference type="SUPFAM" id="SSF52151">
    <property type="entry name" value="FabD/lysophospholipase-like"/>
    <property type="match status" value="1"/>
</dbReference>
<dbReference type="SUPFAM" id="SSF51735">
    <property type="entry name" value="NAD(P)-binding Rossmann-fold domains"/>
    <property type="match status" value="3"/>
</dbReference>
<dbReference type="SUPFAM" id="SSF55048">
    <property type="entry name" value="Probable ACP-binding domain of malonyl-CoA ACP transacylase"/>
    <property type="match status" value="1"/>
</dbReference>
<dbReference type="SUPFAM" id="SSF53335">
    <property type="entry name" value="S-adenosyl-L-methionine-dependent methyltransferases"/>
    <property type="match status" value="1"/>
</dbReference>
<dbReference type="SUPFAM" id="SSF53901">
    <property type="entry name" value="Thiolase-like"/>
    <property type="match status" value="1"/>
</dbReference>
<dbReference type="PROSITE" id="PS00455">
    <property type="entry name" value="AMP_BINDING"/>
    <property type="match status" value="1"/>
</dbReference>
<dbReference type="PROSITE" id="PS50075">
    <property type="entry name" value="CARRIER"/>
    <property type="match status" value="2"/>
</dbReference>
<dbReference type="PROSITE" id="PS00606">
    <property type="entry name" value="KS3_1"/>
    <property type="match status" value="1"/>
</dbReference>
<dbReference type="PROSITE" id="PS52004">
    <property type="entry name" value="KS3_2"/>
    <property type="match status" value="1"/>
</dbReference>
<dbReference type="PROSITE" id="PS00012">
    <property type="entry name" value="PHOSPHOPANTETHEINE"/>
    <property type="match status" value="1"/>
</dbReference>
<dbReference type="PROSITE" id="PS52019">
    <property type="entry name" value="PKS_MFAS_DH"/>
    <property type="match status" value="1"/>
</dbReference>
<proteinExistence type="evidence at protein level"/>
<accession>A0A0F7GFS4</accession>
<reference key="1">
    <citation type="journal article" date="2015" name="Org. Lett.">
        <title>Biosynthesis of the tetramic acids Sch210971 and Sch210972.</title>
        <authorList>
            <person name="Kakule T.B."/>
            <person name="Zhang S."/>
            <person name="Zhan J."/>
            <person name="Schmidt E.W."/>
        </authorList>
    </citation>
    <scope>NUCLEOTIDE SEQUENCE [GENOMIC DNA]</scope>
    <scope>FUNCTION</scope>
    <scope>CATALYTIC ACTIVITY</scope>
    <scope>DOMAIN</scope>
    <scope>PATHWAY</scope>
</reference>
<feature type="chain" id="PRO_0000453332" description="Hybrid PKS-NRPS synthetase tasS">
    <location>
        <begin position="1"/>
        <end position="4061"/>
    </location>
</feature>
<feature type="domain" description="Ketosynthase family 3 (KS3)" evidence="3">
    <location>
        <begin position="7"/>
        <end position="472"/>
    </location>
</feature>
<feature type="domain" description="PKS/mFAS DH" evidence="4">
    <location>
        <begin position="977"/>
        <end position="1282"/>
    </location>
</feature>
<feature type="domain" description="Carrier 1" evidence="2">
    <location>
        <begin position="2437"/>
        <end position="2516"/>
    </location>
</feature>
<feature type="domain" description="Carrier 2" evidence="2">
    <location>
        <begin position="3633"/>
        <end position="3712"/>
    </location>
</feature>
<feature type="region of interest" description="Malonyl-CoA:ACP transacylase (MAT) domain" evidence="1">
    <location>
        <begin position="586"/>
        <end position="911"/>
    </location>
</feature>
<feature type="region of interest" description="Dehydratase (DH) domain" evidence="1">
    <location>
        <begin position="977"/>
        <end position="1280"/>
    </location>
</feature>
<feature type="region of interest" description="N-terminal hotdog fold" evidence="4">
    <location>
        <begin position="977"/>
        <end position="1113"/>
    </location>
</feature>
<feature type="region of interest" description="C-terminal hotdog fold" evidence="4">
    <location>
        <begin position="1128"/>
        <end position="1282"/>
    </location>
</feature>
<feature type="region of interest" description="Methyltransferase (MT) domain" evidence="1">
    <location>
        <begin position="1425"/>
        <end position="1619"/>
    </location>
</feature>
<feature type="region of interest" description="Ketoreductase (KR) domain" evidence="1">
    <location>
        <begin position="2153"/>
        <end position="2325"/>
    </location>
</feature>
<feature type="region of interest" description="Disordered" evidence="6">
    <location>
        <begin position="2527"/>
        <end position="2617"/>
    </location>
</feature>
<feature type="region of interest" description="Condensation (C) domain" evidence="1">
    <location>
        <begin position="2632"/>
        <end position="3077"/>
    </location>
</feature>
<feature type="region of interest" description="Adenylation (A) (KR) domain" evidence="1">
    <location>
        <begin position="3103"/>
        <end position="3510"/>
    </location>
</feature>
<feature type="region of interest" description="Reductase (RED) domain" evidence="1">
    <location>
        <begin position="3813"/>
        <end position="3969"/>
    </location>
</feature>
<feature type="compositionally biased region" description="Low complexity" evidence="6">
    <location>
        <begin position="2556"/>
        <end position="2576"/>
    </location>
</feature>
<feature type="compositionally biased region" description="Polar residues" evidence="6">
    <location>
        <begin position="2577"/>
        <end position="2592"/>
    </location>
</feature>
<feature type="active site" evidence="5">
    <location>
        <position position="180"/>
    </location>
</feature>
<feature type="active site" description="Proton acceptor; for dehydratase activity" evidence="4">
    <location>
        <position position="1010"/>
    </location>
</feature>
<feature type="active site" description="Proton donor; for dehydratase activity" evidence="4">
    <location>
        <position position="1188"/>
    </location>
</feature>
<feature type="modified residue" description="O-(pantetheine 4'-phosphoryl)serine" evidence="2">
    <location>
        <position position="2475"/>
    </location>
</feature>
<feature type="modified residue" description="O-(pantetheine 4'-phosphoryl)serine" evidence="2">
    <location>
        <position position="3672"/>
    </location>
</feature>
<name>TASS_HAPIR</name>